<accession>B7HL46</accession>
<name>DAPB_BACC7</name>
<dbReference type="EC" id="1.17.1.8" evidence="1"/>
<dbReference type="EMBL" id="CP001177">
    <property type="protein sequence ID" value="ACJ80992.1"/>
    <property type="molecule type" value="Genomic_DNA"/>
</dbReference>
<dbReference type="SMR" id="B7HL46"/>
<dbReference type="KEGG" id="bcr:BCAH187_A1699"/>
<dbReference type="HOGENOM" id="CLU_047479_0_1_9"/>
<dbReference type="UniPathway" id="UPA00034">
    <property type="reaction ID" value="UER00018"/>
</dbReference>
<dbReference type="Proteomes" id="UP000002214">
    <property type="component" value="Chromosome"/>
</dbReference>
<dbReference type="GO" id="GO:0005829">
    <property type="term" value="C:cytosol"/>
    <property type="evidence" value="ECO:0007669"/>
    <property type="project" value="TreeGrafter"/>
</dbReference>
<dbReference type="GO" id="GO:0008839">
    <property type="term" value="F:4-hydroxy-tetrahydrodipicolinate reductase"/>
    <property type="evidence" value="ECO:0007669"/>
    <property type="project" value="UniProtKB-EC"/>
</dbReference>
<dbReference type="GO" id="GO:0051287">
    <property type="term" value="F:NAD binding"/>
    <property type="evidence" value="ECO:0007669"/>
    <property type="project" value="UniProtKB-UniRule"/>
</dbReference>
<dbReference type="GO" id="GO:0050661">
    <property type="term" value="F:NADP binding"/>
    <property type="evidence" value="ECO:0007669"/>
    <property type="project" value="UniProtKB-UniRule"/>
</dbReference>
<dbReference type="GO" id="GO:0016726">
    <property type="term" value="F:oxidoreductase activity, acting on CH or CH2 groups, NAD or NADP as acceptor"/>
    <property type="evidence" value="ECO:0007669"/>
    <property type="project" value="UniProtKB-UniRule"/>
</dbReference>
<dbReference type="GO" id="GO:0019877">
    <property type="term" value="P:diaminopimelate biosynthetic process"/>
    <property type="evidence" value="ECO:0007669"/>
    <property type="project" value="UniProtKB-UniRule"/>
</dbReference>
<dbReference type="GO" id="GO:0009089">
    <property type="term" value="P:lysine biosynthetic process via diaminopimelate"/>
    <property type="evidence" value="ECO:0007669"/>
    <property type="project" value="UniProtKB-UniRule"/>
</dbReference>
<dbReference type="CDD" id="cd02274">
    <property type="entry name" value="DHDPR_N"/>
    <property type="match status" value="1"/>
</dbReference>
<dbReference type="FunFam" id="3.30.360.10:FF:000009">
    <property type="entry name" value="4-hydroxy-tetrahydrodipicolinate reductase"/>
    <property type="match status" value="1"/>
</dbReference>
<dbReference type="FunFam" id="3.40.50.720:FF:000180">
    <property type="entry name" value="4-hydroxy-tetrahydrodipicolinate reductase"/>
    <property type="match status" value="1"/>
</dbReference>
<dbReference type="Gene3D" id="3.30.360.10">
    <property type="entry name" value="Dihydrodipicolinate Reductase, domain 2"/>
    <property type="match status" value="1"/>
</dbReference>
<dbReference type="Gene3D" id="3.40.50.720">
    <property type="entry name" value="NAD(P)-binding Rossmann-like Domain"/>
    <property type="match status" value="1"/>
</dbReference>
<dbReference type="HAMAP" id="MF_00102">
    <property type="entry name" value="DapB"/>
    <property type="match status" value="1"/>
</dbReference>
<dbReference type="InterPro" id="IPR022663">
    <property type="entry name" value="DapB_C"/>
</dbReference>
<dbReference type="InterPro" id="IPR000846">
    <property type="entry name" value="DapB_N"/>
</dbReference>
<dbReference type="InterPro" id="IPR022664">
    <property type="entry name" value="DapB_N_CS"/>
</dbReference>
<dbReference type="InterPro" id="IPR023940">
    <property type="entry name" value="DHDPR_bac"/>
</dbReference>
<dbReference type="InterPro" id="IPR036291">
    <property type="entry name" value="NAD(P)-bd_dom_sf"/>
</dbReference>
<dbReference type="NCBIfam" id="TIGR00036">
    <property type="entry name" value="dapB"/>
    <property type="match status" value="1"/>
</dbReference>
<dbReference type="PANTHER" id="PTHR20836:SF0">
    <property type="entry name" value="4-HYDROXY-TETRAHYDRODIPICOLINATE REDUCTASE 1, CHLOROPLASTIC-RELATED"/>
    <property type="match status" value="1"/>
</dbReference>
<dbReference type="PANTHER" id="PTHR20836">
    <property type="entry name" value="DIHYDRODIPICOLINATE REDUCTASE"/>
    <property type="match status" value="1"/>
</dbReference>
<dbReference type="Pfam" id="PF05173">
    <property type="entry name" value="DapB_C"/>
    <property type="match status" value="1"/>
</dbReference>
<dbReference type="Pfam" id="PF01113">
    <property type="entry name" value="DapB_N"/>
    <property type="match status" value="1"/>
</dbReference>
<dbReference type="PIRSF" id="PIRSF000161">
    <property type="entry name" value="DHPR"/>
    <property type="match status" value="1"/>
</dbReference>
<dbReference type="SUPFAM" id="SSF55347">
    <property type="entry name" value="Glyceraldehyde-3-phosphate dehydrogenase-like, C-terminal domain"/>
    <property type="match status" value="1"/>
</dbReference>
<dbReference type="SUPFAM" id="SSF51735">
    <property type="entry name" value="NAD(P)-binding Rossmann-fold domains"/>
    <property type="match status" value="1"/>
</dbReference>
<dbReference type="PROSITE" id="PS01298">
    <property type="entry name" value="DAPB"/>
    <property type="match status" value="1"/>
</dbReference>
<organism>
    <name type="scientific">Bacillus cereus (strain AH187)</name>
    <dbReference type="NCBI Taxonomy" id="405534"/>
    <lineage>
        <taxon>Bacteria</taxon>
        <taxon>Bacillati</taxon>
        <taxon>Bacillota</taxon>
        <taxon>Bacilli</taxon>
        <taxon>Bacillales</taxon>
        <taxon>Bacillaceae</taxon>
        <taxon>Bacillus</taxon>
        <taxon>Bacillus cereus group</taxon>
    </lineage>
</organism>
<keyword id="KW-0028">Amino-acid biosynthesis</keyword>
<keyword id="KW-0963">Cytoplasm</keyword>
<keyword id="KW-0220">Diaminopimelate biosynthesis</keyword>
<keyword id="KW-0457">Lysine biosynthesis</keyword>
<keyword id="KW-0520">NAD</keyword>
<keyword id="KW-0521">NADP</keyword>
<keyword id="KW-0560">Oxidoreductase</keyword>
<proteinExistence type="inferred from homology"/>
<protein>
    <recommendedName>
        <fullName evidence="1">4-hydroxy-tetrahydrodipicolinate reductase</fullName>
        <shortName evidence="1">HTPA reductase</shortName>
        <ecNumber evidence="1">1.17.1.8</ecNumber>
    </recommendedName>
</protein>
<gene>
    <name evidence="1" type="primary">dapB</name>
    <name type="ordered locus">BCAH187_A1699</name>
</gene>
<evidence type="ECO:0000255" key="1">
    <source>
        <dbReference type="HAMAP-Rule" id="MF_00102"/>
    </source>
</evidence>
<evidence type="ECO:0000305" key="2"/>
<comment type="function">
    <text evidence="1">Catalyzes the conversion of 4-hydroxy-tetrahydrodipicolinate (HTPA) to tetrahydrodipicolinate.</text>
</comment>
<comment type="catalytic activity">
    <reaction evidence="1">
        <text>(S)-2,3,4,5-tetrahydrodipicolinate + NAD(+) + H2O = (2S,4S)-4-hydroxy-2,3,4,5-tetrahydrodipicolinate + NADH + H(+)</text>
        <dbReference type="Rhea" id="RHEA:35323"/>
        <dbReference type="ChEBI" id="CHEBI:15377"/>
        <dbReference type="ChEBI" id="CHEBI:15378"/>
        <dbReference type="ChEBI" id="CHEBI:16845"/>
        <dbReference type="ChEBI" id="CHEBI:57540"/>
        <dbReference type="ChEBI" id="CHEBI:57945"/>
        <dbReference type="ChEBI" id="CHEBI:67139"/>
        <dbReference type="EC" id="1.17.1.8"/>
    </reaction>
</comment>
<comment type="catalytic activity">
    <reaction evidence="1">
        <text>(S)-2,3,4,5-tetrahydrodipicolinate + NADP(+) + H2O = (2S,4S)-4-hydroxy-2,3,4,5-tetrahydrodipicolinate + NADPH + H(+)</text>
        <dbReference type="Rhea" id="RHEA:35331"/>
        <dbReference type="ChEBI" id="CHEBI:15377"/>
        <dbReference type="ChEBI" id="CHEBI:15378"/>
        <dbReference type="ChEBI" id="CHEBI:16845"/>
        <dbReference type="ChEBI" id="CHEBI:57783"/>
        <dbReference type="ChEBI" id="CHEBI:58349"/>
        <dbReference type="ChEBI" id="CHEBI:67139"/>
        <dbReference type="EC" id="1.17.1.8"/>
    </reaction>
</comment>
<comment type="pathway">
    <text evidence="1">Amino-acid biosynthesis; L-lysine biosynthesis via DAP pathway; (S)-tetrahydrodipicolinate from L-aspartate: step 4/4.</text>
</comment>
<comment type="subcellular location">
    <subcellularLocation>
        <location evidence="1">Cytoplasm</location>
    </subcellularLocation>
</comment>
<comment type="similarity">
    <text evidence="1">Belongs to the DapB family.</text>
</comment>
<comment type="caution">
    <text evidence="2">Was originally thought to be a dihydrodipicolinate reductase (DHDPR), catalyzing the conversion of dihydrodipicolinate to tetrahydrodipicolinate. However, it was shown in E.coli that the substrate of the enzymatic reaction is not dihydrodipicolinate (DHDP) but in fact (2S,4S)-4-hydroxy-2,3,4,5-tetrahydrodipicolinic acid (HTPA), the product released by the DapA-catalyzed reaction.</text>
</comment>
<sequence length="266" mass="29249">MKEIKVIIAGPRGRMGHEAVLLMERTEHFNLVAAVDYKHGGEKISDLPGMPALDTPIYGDLHTCLEEVEADVLLDLTTPEVGKQHVTLAVERGLRSVIGTTGFTEEELKQLTETAKEKAVGTIIAPNFAIGAVLMMKFSQMAAKYFQDVEVIELHHDQKLDAPSGTAVKTVELIRQNRESKQQGHPNEVEQLEGARGANVDGIHIHSVRLPGLIAHQEVMFGGDGQMLTVRHDSFNRASFMSGVKLSIETVMNLDHLVYGLENIID</sequence>
<reference key="1">
    <citation type="submission" date="2008-10" db="EMBL/GenBank/DDBJ databases">
        <title>Genome sequence of Bacillus cereus AH187.</title>
        <authorList>
            <person name="Dodson R.J."/>
            <person name="Durkin A.S."/>
            <person name="Rosovitz M.J."/>
            <person name="Rasko D.A."/>
            <person name="Kolsto A.B."/>
            <person name="Okstad O.A."/>
            <person name="Ravel J."/>
            <person name="Sutton G."/>
        </authorList>
    </citation>
    <scope>NUCLEOTIDE SEQUENCE [LARGE SCALE GENOMIC DNA]</scope>
    <source>
        <strain>AH187</strain>
    </source>
</reference>
<feature type="chain" id="PRO_1000117361" description="4-hydroxy-tetrahydrodipicolinate reductase">
    <location>
        <begin position="1"/>
        <end position="266"/>
    </location>
</feature>
<feature type="active site" description="Proton donor/acceptor" evidence="1">
    <location>
        <position position="155"/>
    </location>
</feature>
<feature type="active site" description="Proton donor" evidence="1">
    <location>
        <position position="159"/>
    </location>
</feature>
<feature type="binding site" evidence="1">
    <location>
        <begin position="10"/>
        <end position="15"/>
    </location>
    <ligand>
        <name>NAD(+)</name>
        <dbReference type="ChEBI" id="CHEBI:57540"/>
    </ligand>
</feature>
<feature type="binding site" evidence="1">
    <location>
        <position position="38"/>
    </location>
    <ligand>
        <name>NADP(+)</name>
        <dbReference type="ChEBI" id="CHEBI:58349"/>
    </ligand>
</feature>
<feature type="binding site" evidence="1">
    <location>
        <begin position="99"/>
        <end position="101"/>
    </location>
    <ligand>
        <name>NAD(+)</name>
        <dbReference type="ChEBI" id="CHEBI:57540"/>
    </ligand>
</feature>
<feature type="binding site" evidence="1">
    <location>
        <begin position="125"/>
        <end position="128"/>
    </location>
    <ligand>
        <name>NAD(+)</name>
        <dbReference type="ChEBI" id="CHEBI:57540"/>
    </ligand>
</feature>
<feature type="binding site" evidence="1">
    <location>
        <position position="156"/>
    </location>
    <ligand>
        <name>(S)-2,3,4,5-tetrahydrodipicolinate</name>
        <dbReference type="ChEBI" id="CHEBI:16845"/>
    </ligand>
</feature>
<feature type="binding site" evidence="1">
    <location>
        <begin position="165"/>
        <end position="166"/>
    </location>
    <ligand>
        <name>(S)-2,3,4,5-tetrahydrodipicolinate</name>
        <dbReference type="ChEBI" id="CHEBI:16845"/>
    </ligand>
</feature>